<comment type="function">
    <text evidence="1">Catalyzes the phosphorylation of D-fructose 6-phosphate to fructose 1,6-bisphosphate by ATP, the first committing step of glycolysis.</text>
</comment>
<comment type="catalytic activity">
    <reaction evidence="1">
        <text>beta-D-fructose 6-phosphate + ATP = beta-D-fructose 1,6-bisphosphate + ADP + H(+)</text>
        <dbReference type="Rhea" id="RHEA:16109"/>
        <dbReference type="ChEBI" id="CHEBI:15378"/>
        <dbReference type="ChEBI" id="CHEBI:30616"/>
        <dbReference type="ChEBI" id="CHEBI:32966"/>
        <dbReference type="ChEBI" id="CHEBI:57634"/>
        <dbReference type="ChEBI" id="CHEBI:456216"/>
        <dbReference type="EC" id="2.7.1.11"/>
    </reaction>
</comment>
<comment type="cofactor">
    <cofactor evidence="1">
        <name>Mg(2+)</name>
        <dbReference type="ChEBI" id="CHEBI:18420"/>
    </cofactor>
</comment>
<comment type="activity regulation">
    <text evidence="1">Allosterically activated by ADP and other diphosphonucleosides, and allosterically inhibited by phosphoenolpyruvate.</text>
</comment>
<comment type="pathway">
    <text evidence="1">Carbohydrate degradation; glycolysis; D-glyceraldehyde 3-phosphate and glycerone phosphate from D-glucose: step 3/4.</text>
</comment>
<comment type="subunit">
    <text evidence="1">Homotetramer.</text>
</comment>
<comment type="subcellular location">
    <subcellularLocation>
        <location evidence="1">Cytoplasm</location>
    </subcellularLocation>
</comment>
<comment type="similarity">
    <text evidence="1">Belongs to the phosphofructokinase type A (PFKA) family. ATP-dependent PFK group I subfamily. Prokaryotic clade 'B1' sub-subfamily.</text>
</comment>
<keyword id="KW-0021">Allosteric enzyme</keyword>
<keyword id="KW-0067">ATP-binding</keyword>
<keyword id="KW-0963">Cytoplasm</keyword>
<keyword id="KW-0324">Glycolysis</keyword>
<keyword id="KW-0418">Kinase</keyword>
<keyword id="KW-0460">Magnesium</keyword>
<keyword id="KW-0479">Metal-binding</keyword>
<keyword id="KW-0547">Nucleotide-binding</keyword>
<keyword id="KW-1185">Reference proteome</keyword>
<keyword id="KW-0808">Transferase</keyword>
<evidence type="ECO:0000255" key="1">
    <source>
        <dbReference type="HAMAP-Rule" id="MF_00339"/>
    </source>
</evidence>
<dbReference type="EC" id="2.7.1.11" evidence="1"/>
<dbReference type="EMBL" id="AP009484">
    <property type="protein sequence ID" value="BAH18072.1"/>
    <property type="molecule type" value="Genomic_DNA"/>
</dbReference>
<dbReference type="RefSeq" id="WP_012657270.1">
    <property type="nucleotide sequence ID" value="NC_011999.1"/>
</dbReference>
<dbReference type="SMR" id="B9E7A4"/>
<dbReference type="STRING" id="458233.MCCL_1365"/>
<dbReference type="GeneID" id="61128731"/>
<dbReference type="KEGG" id="mcl:MCCL_1365"/>
<dbReference type="eggNOG" id="COG0205">
    <property type="taxonomic scope" value="Bacteria"/>
</dbReference>
<dbReference type="HOGENOM" id="CLU_020655_0_1_9"/>
<dbReference type="OrthoDB" id="9802503at2"/>
<dbReference type="UniPathway" id="UPA00109">
    <property type="reaction ID" value="UER00182"/>
</dbReference>
<dbReference type="Proteomes" id="UP000001383">
    <property type="component" value="Chromosome"/>
</dbReference>
<dbReference type="GO" id="GO:0005945">
    <property type="term" value="C:6-phosphofructokinase complex"/>
    <property type="evidence" value="ECO:0007669"/>
    <property type="project" value="TreeGrafter"/>
</dbReference>
<dbReference type="GO" id="GO:0003872">
    <property type="term" value="F:6-phosphofructokinase activity"/>
    <property type="evidence" value="ECO:0007669"/>
    <property type="project" value="UniProtKB-UniRule"/>
</dbReference>
<dbReference type="GO" id="GO:0016208">
    <property type="term" value="F:AMP binding"/>
    <property type="evidence" value="ECO:0007669"/>
    <property type="project" value="TreeGrafter"/>
</dbReference>
<dbReference type="GO" id="GO:0005524">
    <property type="term" value="F:ATP binding"/>
    <property type="evidence" value="ECO:0007669"/>
    <property type="project" value="UniProtKB-KW"/>
</dbReference>
<dbReference type="GO" id="GO:0070095">
    <property type="term" value="F:fructose-6-phosphate binding"/>
    <property type="evidence" value="ECO:0007669"/>
    <property type="project" value="TreeGrafter"/>
</dbReference>
<dbReference type="GO" id="GO:0042802">
    <property type="term" value="F:identical protein binding"/>
    <property type="evidence" value="ECO:0007669"/>
    <property type="project" value="TreeGrafter"/>
</dbReference>
<dbReference type="GO" id="GO:0046872">
    <property type="term" value="F:metal ion binding"/>
    <property type="evidence" value="ECO:0007669"/>
    <property type="project" value="UniProtKB-KW"/>
</dbReference>
<dbReference type="GO" id="GO:0048029">
    <property type="term" value="F:monosaccharide binding"/>
    <property type="evidence" value="ECO:0007669"/>
    <property type="project" value="TreeGrafter"/>
</dbReference>
<dbReference type="GO" id="GO:0061621">
    <property type="term" value="P:canonical glycolysis"/>
    <property type="evidence" value="ECO:0007669"/>
    <property type="project" value="TreeGrafter"/>
</dbReference>
<dbReference type="GO" id="GO:0030388">
    <property type="term" value="P:fructose 1,6-bisphosphate metabolic process"/>
    <property type="evidence" value="ECO:0007669"/>
    <property type="project" value="TreeGrafter"/>
</dbReference>
<dbReference type="GO" id="GO:0006002">
    <property type="term" value="P:fructose 6-phosphate metabolic process"/>
    <property type="evidence" value="ECO:0007669"/>
    <property type="project" value="InterPro"/>
</dbReference>
<dbReference type="FunFam" id="3.40.50.450:FF:000001">
    <property type="entry name" value="ATP-dependent 6-phosphofructokinase"/>
    <property type="match status" value="1"/>
</dbReference>
<dbReference type="FunFam" id="3.40.50.460:FF:000002">
    <property type="entry name" value="ATP-dependent 6-phosphofructokinase"/>
    <property type="match status" value="1"/>
</dbReference>
<dbReference type="Gene3D" id="3.40.50.450">
    <property type="match status" value="1"/>
</dbReference>
<dbReference type="Gene3D" id="3.40.50.460">
    <property type="entry name" value="Phosphofructokinase domain"/>
    <property type="match status" value="1"/>
</dbReference>
<dbReference type="HAMAP" id="MF_00339">
    <property type="entry name" value="Phosphofructokinase_I_B1"/>
    <property type="match status" value="1"/>
</dbReference>
<dbReference type="InterPro" id="IPR022953">
    <property type="entry name" value="ATP_PFK"/>
</dbReference>
<dbReference type="InterPro" id="IPR012003">
    <property type="entry name" value="ATP_PFK_prok-type"/>
</dbReference>
<dbReference type="InterPro" id="IPR012828">
    <property type="entry name" value="PFKA_ATP_prok"/>
</dbReference>
<dbReference type="InterPro" id="IPR015912">
    <property type="entry name" value="Phosphofructokinase_CS"/>
</dbReference>
<dbReference type="InterPro" id="IPR000023">
    <property type="entry name" value="Phosphofructokinase_dom"/>
</dbReference>
<dbReference type="InterPro" id="IPR035966">
    <property type="entry name" value="PKF_sf"/>
</dbReference>
<dbReference type="NCBIfam" id="TIGR02482">
    <property type="entry name" value="PFKA_ATP"/>
    <property type="match status" value="1"/>
</dbReference>
<dbReference type="NCBIfam" id="NF002872">
    <property type="entry name" value="PRK03202.1"/>
    <property type="match status" value="1"/>
</dbReference>
<dbReference type="PANTHER" id="PTHR13697:SF4">
    <property type="entry name" value="ATP-DEPENDENT 6-PHOSPHOFRUCTOKINASE"/>
    <property type="match status" value="1"/>
</dbReference>
<dbReference type="PANTHER" id="PTHR13697">
    <property type="entry name" value="PHOSPHOFRUCTOKINASE"/>
    <property type="match status" value="1"/>
</dbReference>
<dbReference type="Pfam" id="PF00365">
    <property type="entry name" value="PFK"/>
    <property type="match status" value="1"/>
</dbReference>
<dbReference type="PIRSF" id="PIRSF000532">
    <property type="entry name" value="ATP_PFK_prok"/>
    <property type="match status" value="1"/>
</dbReference>
<dbReference type="PRINTS" id="PR00476">
    <property type="entry name" value="PHFRCTKINASE"/>
</dbReference>
<dbReference type="SUPFAM" id="SSF53784">
    <property type="entry name" value="Phosphofructokinase"/>
    <property type="match status" value="1"/>
</dbReference>
<dbReference type="PROSITE" id="PS00433">
    <property type="entry name" value="PHOSPHOFRUCTOKINASE"/>
    <property type="match status" value="1"/>
</dbReference>
<feature type="chain" id="PRO_1000192376" description="ATP-dependent 6-phosphofructokinase">
    <location>
        <begin position="1"/>
        <end position="319"/>
    </location>
</feature>
<feature type="active site" description="Proton acceptor" evidence="1">
    <location>
        <position position="127"/>
    </location>
</feature>
<feature type="binding site" evidence="1">
    <location>
        <position position="11"/>
    </location>
    <ligand>
        <name>ATP</name>
        <dbReference type="ChEBI" id="CHEBI:30616"/>
    </ligand>
</feature>
<feature type="binding site" evidence="1">
    <location>
        <begin position="21"/>
        <end position="25"/>
    </location>
    <ligand>
        <name>ADP</name>
        <dbReference type="ChEBI" id="CHEBI:456216"/>
        <note>allosteric activator; ligand shared between dimeric partners</note>
    </ligand>
</feature>
<feature type="binding site" evidence="1">
    <location>
        <begin position="72"/>
        <end position="73"/>
    </location>
    <ligand>
        <name>ATP</name>
        <dbReference type="ChEBI" id="CHEBI:30616"/>
    </ligand>
</feature>
<feature type="binding site" evidence="1">
    <location>
        <begin position="102"/>
        <end position="105"/>
    </location>
    <ligand>
        <name>ATP</name>
        <dbReference type="ChEBI" id="CHEBI:30616"/>
    </ligand>
</feature>
<feature type="binding site" evidence="1">
    <location>
        <position position="103"/>
    </location>
    <ligand>
        <name>Mg(2+)</name>
        <dbReference type="ChEBI" id="CHEBI:18420"/>
        <note>catalytic</note>
    </ligand>
</feature>
<feature type="binding site" description="in other chain" evidence="1">
    <location>
        <begin position="125"/>
        <end position="127"/>
    </location>
    <ligand>
        <name>substrate</name>
        <note>ligand shared between dimeric partners</note>
    </ligand>
</feature>
<feature type="binding site" description="in other chain" evidence="1">
    <location>
        <position position="154"/>
    </location>
    <ligand>
        <name>ADP</name>
        <dbReference type="ChEBI" id="CHEBI:456216"/>
        <note>allosteric activator; ligand shared between dimeric partners</note>
    </ligand>
</feature>
<feature type="binding site" evidence="1">
    <location>
        <position position="162"/>
    </location>
    <ligand>
        <name>substrate</name>
        <note>ligand shared between dimeric partners</note>
    </ligand>
</feature>
<feature type="binding site" description="in other chain" evidence="1">
    <location>
        <begin position="169"/>
        <end position="171"/>
    </location>
    <ligand>
        <name>substrate</name>
        <note>ligand shared between dimeric partners</note>
    </ligand>
</feature>
<feature type="binding site" description="in other chain" evidence="1">
    <location>
        <begin position="185"/>
        <end position="187"/>
    </location>
    <ligand>
        <name>ADP</name>
        <dbReference type="ChEBI" id="CHEBI:456216"/>
        <note>allosteric activator; ligand shared between dimeric partners</note>
    </ligand>
</feature>
<feature type="binding site" description="in other chain" evidence="1">
    <location>
        <position position="211"/>
    </location>
    <ligand>
        <name>ADP</name>
        <dbReference type="ChEBI" id="CHEBI:456216"/>
        <note>allosteric activator; ligand shared between dimeric partners</note>
    </ligand>
</feature>
<feature type="binding site" description="in other chain" evidence="1">
    <location>
        <begin position="213"/>
        <end position="215"/>
    </location>
    <ligand>
        <name>ADP</name>
        <dbReference type="ChEBI" id="CHEBI:456216"/>
        <note>allosteric activator; ligand shared between dimeric partners</note>
    </ligand>
</feature>
<feature type="binding site" description="in other chain" evidence="1">
    <location>
        <position position="222"/>
    </location>
    <ligand>
        <name>substrate</name>
        <note>ligand shared between dimeric partners</note>
    </ligand>
</feature>
<feature type="binding site" evidence="1">
    <location>
        <position position="243"/>
    </location>
    <ligand>
        <name>substrate</name>
        <note>ligand shared between dimeric partners</note>
    </ligand>
</feature>
<feature type="binding site" description="in other chain" evidence="1">
    <location>
        <begin position="249"/>
        <end position="252"/>
    </location>
    <ligand>
        <name>substrate</name>
        <note>ligand shared between dimeric partners</note>
    </ligand>
</feature>
<proteinExistence type="inferred from homology"/>
<accession>B9E7A4</accession>
<gene>
    <name evidence="1" type="primary">pfkA</name>
    <name type="ordered locus">MCCL_1365</name>
</gene>
<sequence>MKKIAVLTSGGDAPGMNAAVRAVVRKAMYYDIEVYGVYQGYQGLINNNIKKMERGTVGDKIQRGGTFLQSARCPEFKDPEVRKQAIANLNNLGIEGLVVIGGDGSYRGAQRLNEEGIKTIGIPGTIDNDINGTDFTIGFDTALNTIVEAIDKIRDTASSHERTFIVEVMGRDAGDLALWSGLAGGAETVLCPEHRKDVKVIADKIQQGIERGKKHSIIVVAEGVMTGEECGQELKKYINVDTRISVLGHMQRGGSPSGMDRVLASRLGGYAVELLMNDETGLAVGIQNNSLSKTKFEDIFTSVHHLDEKMYELSNELSI</sequence>
<reference key="1">
    <citation type="journal article" date="2009" name="J. Bacteriol.">
        <title>Complete genome sequence of Macrococcus caseolyticus strain JCSCS5402, reflecting the ancestral genome of the human-pathogenic staphylococci.</title>
        <authorList>
            <person name="Baba T."/>
            <person name="Kuwahara-Arai K."/>
            <person name="Uchiyama I."/>
            <person name="Takeuchi F."/>
            <person name="Ito T."/>
            <person name="Hiramatsu K."/>
        </authorList>
    </citation>
    <scope>NUCLEOTIDE SEQUENCE [LARGE SCALE GENOMIC DNA]</scope>
    <source>
        <strain>JCSC5402</strain>
    </source>
</reference>
<protein>
    <recommendedName>
        <fullName evidence="1">ATP-dependent 6-phosphofructokinase</fullName>
        <shortName evidence="1">ATP-PFK</shortName>
        <shortName evidence="1">Phosphofructokinase</shortName>
        <ecNumber evidence="1">2.7.1.11</ecNumber>
    </recommendedName>
    <alternativeName>
        <fullName evidence="1">Phosphohexokinase</fullName>
    </alternativeName>
</protein>
<name>PFKA_MACCJ</name>
<organism>
    <name type="scientific">Macrococcus caseolyticus (strain JCSC5402)</name>
    <name type="common">Macrococcoides caseolyticum</name>
    <dbReference type="NCBI Taxonomy" id="458233"/>
    <lineage>
        <taxon>Bacteria</taxon>
        <taxon>Bacillati</taxon>
        <taxon>Bacillota</taxon>
        <taxon>Bacilli</taxon>
        <taxon>Bacillales</taxon>
        <taxon>Staphylococcaceae</taxon>
        <taxon>Macrococcoides</taxon>
    </lineage>
</organism>